<gene>
    <name evidence="9" type="primary">NDUFAF7</name>
    <name evidence="9" type="synonym">C2orf56</name>
    <name type="ORF">PRO1853</name>
</gene>
<feature type="transit peptide" description="Mitochondrion" evidence="1">
    <location>
        <begin position="1"/>
        <end position="46"/>
    </location>
</feature>
<feature type="chain" id="PRO_0000315672" description="Protein arginine methyltransferase NDUFAF7, mitochondrial">
    <location>
        <begin position="47"/>
        <end position="441"/>
    </location>
</feature>
<feature type="splice variant" id="VSP_030606" description="In isoform 2." evidence="6">
    <location>
        <begin position="73"/>
        <end position="99"/>
    </location>
</feature>
<feature type="splice variant" id="VSP_030607" description="In isoform 2." evidence="6">
    <location>
        <begin position="157"/>
        <end position="227"/>
    </location>
</feature>
<feature type="sequence variant" id="VAR_038274" description="In dbSNP:rs2714473.">
    <original>P</original>
    <variation>A</variation>
    <location>
        <position position="39"/>
    </location>
</feature>
<feature type="sequence variant" id="VAR_079608" description="Found in patients with myopia; likely pathogenic; may decrease mitochondrial complex I activity; decreases the production of ATP; decreases reactive oxygen species production." evidence="5">
    <original>D</original>
    <variation>E</variation>
    <location>
        <position position="266"/>
    </location>
</feature>
<feature type="mutagenesis site" description="Loss of function." evidence="4">
    <original>G</original>
    <variation>V</variation>
    <location>
        <position position="124"/>
    </location>
</feature>
<sequence>MSVLLRSGLGPLCAVARAAIPFIWRGKYFSSGNEPAENPVTPMLRHLMYKIKSTGPITVAEYMKEVLTNPAKGYYVYRDMLGEKGDFITSPEISQIFGELLGIWFISEWMATGKSTAFQLVELGPGRGTLVGDILRVFTQLGSVLKNCDISVHLVEVSQKLSEIQALTLTKEKVPLERNAGSPVYMKGVTKSGIPISWYRDLHDVPKGYSFYLAHEFFDVLPVHKFQKTPQGWREVFVDIDPQVSDKLRFVLAPSATPAEAFIQHDETRDHVEVCPDAGVIIEELSQRIALTGGAALVADYGHDGTKTDTFRGFCDHKLHDVLIAPGTADLTADVDFSYLRRMAQGKVASLGPIKQHTFLKNMGIDVRLKVLLDKSNEPSVRQQLLQGYDMLMNPKKMGERFNFFALLPHQRLQGGRYQRNARQSKPFASVVAGFSELAWQ</sequence>
<organism>
    <name type="scientific">Homo sapiens</name>
    <name type="common">Human</name>
    <dbReference type="NCBI Taxonomy" id="9606"/>
    <lineage>
        <taxon>Eukaryota</taxon>
        <taxon>Metazoa</taxon>
        <taxon>Chordata</taxon>
        <taxon>Craniata</taxon>
        <taxon>Vertebrata</taxon>
        <taxon>Euteleostomi</taxon>
        <taxon>Mammalia</taxon>
        <taxon>Eutheria</taxon>
        <taxon>Euarchontoglires</taxon>
        <taxon>Primates</taxon>
        <taxon>Haplorrhini</taxon>
        <taxon>Catarrhini</taxon>
        <taxon>Hominidae</taxon>
        <taxon>Homo</taxon>
    </lineage>
</organism>
<evidence type="ECO:0000255" key="1"/>
<evidence type="ECO:0000269" key="2">
    <source>
    </source>
</evidence>
<evidence type="ECO:0000269" key="3">
    <source>
    </source>
</evidence>
<evidence type="ECO:0000269" key="4">
    <source>
    </source>
</evidence>
<evidence type="ECO:0000269" key="5">
    <source>
    </source>
</evidence>
<evidence type="ECO:0000303" key="6">
    <source>
    </source>
</evidence>
<evidence type="ECO:0000303" key="7">
    <source>
    </source>
</evidence>
<evidence type="ECO:0000305" key="8"/>
<evidence type="ECO:0000312" key="9">
    <source>
        <dbReference type="HGNC" id="HGNC:28816"/>
    </source>
</evidence>
<keyword id="KW-0025">Alternative splicing</keyword>
<keyword id="KW-0489">Methyltransferase</keyword>
<keyword id="KW-0496">Mitochondrion</keyword>
<keyword id="KW-1267">Proteomics identification</keyword>
<keyword id="KW-1185">Reference proteome</keyword>
<keyword id="KW-0808">Transferase</keyword>
<keyword id="KW-0809">Transit peptide</keyword>
<accession>Q7L592</accession>
<accession>Q7Z399</accession>
<accession>Q9P1G3</accession>
<dbReference type="EC" id="2.1.1.320" evidence="3"/>
<dbReference type="EMBL" id="BX538031">
    <property type="protein sequence ID" value="CAD97976.1"/>
    <property type="molecule type" value="mRNA"/>
</dbReference>
<dbReference type="EMBL" id="AC007390">
    <property type="protein sequence ID" value="AAY14816.1"/>
    <property type="molecule type" value="Genomic_DNA"/>
</dbReference>
<dbReference type="EMBL" id="CH471053">
    <property type="protein sequence ID" value="EAX00402.1"/>
    <property type="molecule type" value="Genomic_DNA"/>
</dbReference>
<dbReference type="EMBL" id="BC004548">
    <property type="protein sequence ID" value="AAH04548.2"/>
    <property type="molecule type" value="mRNA"/>
</dbReference>
<dbReference type="EMBL" id="BC012374">
    <property type="protein sequence ID" value="AAH12374.2"/>
    <property type="status" value="ALT_INIT"/>
    <property type="molecule type" value="mRNA"/>
</dbReference>
<dbReference type="EMBL" id="AF116671">
    <property type="protein sequence ID" value="AAF71091.1"/>
    <property type="status" value="ALT_INIT"/>
    <property type="molecule type" value="mRNA"/>
</dbReference>
<dbReference type="CCDS" id="CCDS1788.1">
    <molecule id="Q7L592-1"/>
</dbReference>
<dbReference type="CCDS" id="CCDS42673.1">
    <molecule id="Q7L592-2"/>
</dbReference>
<dbReference type="RefSeq" id="NP_001077415.1">
    <molecule id="Q7L592-2"/>
    <property type="nucleotide sequence ID" value="NM_001083946.2"/>
</dbReference>
<dbReference type="RefSeq" id="NP_653337.1">
    <molecule id="Q7L592-1"/>
    <property type="nucleotide sequence ID" value="NM_144736.5"/>
</dbReference>
<dbReference type="SMR" id="Q7L592"/>
<dbReference type="BioGRID" id="120676">
    <property type="interactions" value="71"/>
</dbReference>
<dbReference type="FunCoup" id="Q7L592">
    <property type="interactions" value="1881"/>
</dbReference>
<dbReference type="IntAct" id="Q7L592">
    <property type="interactions" value="52"/>
</dbReference>
<dbReference type="MINT" id="Q7L592"/>
<dbReference type="STRING" id="9606.ENSP00000002125"/>
<dbReference type="GlyGen" id="Q7L592">
    <property type="glycosylation" value="4 sites, 1 O-linked glycan (3 sites)"/>
</dbReference>
<dbReference type="iPTMnet" id="Q7L592"/>
<dbReference type="PhosphoSitePlus" id="Q7L592"/>
<dbReference type="BioMuta" id="NDUFAF7"/>
<dbReference type="DMDM" id="74749891"/>
<dbReference type="jPOST" id="Q7L592"/>
<dbReference type="MassIVE" id="Q7L592"/>
<dbReference type="PaxDb" id="9606-ENSP00000002125"/>
<dbReference type="PeptideAtlas" id="Q7L592"/>
<dbReference type="ProteomicsDB" id="68801">
    <molecule id="Q7L592-1"/>
</dbReference>
<dbReference type="ProteomicsDB" id="68802">
    <molecule id="Q7L592-2"/>
</dbReference>
<dbReference type="Pumba" id="Q7L592"/>
<dbReference type="Antibodypedia" id="52425">
    <property type="antibodies" value="123 antibodies from 15 providers"/>
</dbReference>
<dbReference type="DNASU" id="55471"/>
<dbReference type="Ensembl" id="ENST00000002125.9">
    <molecule id="Q7L592-1"/>
    <property type="protein sequence ID" value="ENSP00000002125.4"/>
    <property type="gene ID" value="ENSG00000003509.16"/>
</dbReference>
<dbReference type="Ensembl" id="ENST00000336237.10">
    <molecule id="Q7L592-2"/>
    <property type="protein sequence ID" value="ENSP00000337431.6"/>
    <property type="gene ID" value="ENSG00000003509.16"/>
</dbReference>
<dbReference type="GeneID" id="55471"/>
<dbReference type="KEGG" id="hsa:55471"/>
<dbReference type="MANE-Select" id="ENST00000002125.9">
    <property type="protein sequence ID" value="ENSP00000002125.4"/>
    <property type="RefSeq nucleotide sequence ID" value="NM_144736.5"/>
    <property type="RefSeq protein sequence ID" value="NP_653337.1"/>
</dbReference>
<dbReference type="UCSC" id="uc002rqa.6">
    <molecule id="Q7L592-1"/>
    <property type="organism name" value="human"/>
</dbReference>
<dbReference type="AGR" id="HGNC:28816"/>
<dbReference type="CTD" id="55471"/>
<dbReference type="DisGeNET" id="55471"/>
<dbReference type="GeneCards" id="NDUFAF7"/>
<dbReference type="HGNC" id="HGNC:28816">
    <property type="gene designation" value="NDUFAF7"/>
</dbReference>
<dbReference type="HPA" id="ENSG00000003509">
    <property type="expression patterns" value="Tissue enhanced (testis)"/>
</dbReference>
<dbReference type="MalaCards" id="NDUFAF7"/>
<dbReference type="MIM" id="615898">
    <property type="type" value="gene"/>
</dbReference>
<dbReference type="neXtProt" id="NX_Q7L592"/>
<dbReference type="OpenTargets" id="ENSG00000003509"/>
<dbReference type="PharmGKB" id="PA162379266"/>
<dbReference type="VEuPathDB" id="HostDB:ENSG00000003509"/>
<dbReference type="eggNOG" id="KOG2901">
    <property type="taxonomic scope" value="Eukaryota"/>
</dbReference>
<dbReference type="GeneTree" id="ENSGT00390000001588"/>
<dbReference type="InParanoid" id="Q7L592"/>
<dbReference type="OMA" id="YYHPQRN"/>
<dbReference type="OrthoDB" id="438553at2759"/>
<dbReference type="PAN-GO" id="Q7L592">
    <property type="GO annotations" value="3 GO annotations based on evolutionary models"/>
</dbReference>
<dbReference type="PhylomeDB" id="Q7L592"/>
<dbReference type="TreeFam" id="TF314312"/>
<dbReference type="PathwayCommons" id="Q7L592"/>
<dbReference type="Reactome" id="R-HSA-6799198">
    <property type="pathway name" value="Complex I biogenesis"/>
</dbReference>
<dbReference type="SignaLink" id="Q7L592"/>
<dbReference type="BioGRID-ORCS" id="55471">
    <property type="hits" value="183 hits in 1157 CRISPR screens"/>
</dbReference>
<dbReference type="ChiTaRS" id="NDUFAF7">
    <property type="organism name" value="human"/>
</dbReference>
<dbReference type="GenomeRNAi" id="55471"/>
<dbReference type="Pharos" id="Q7L592">
    <property type="development level" value="Tbio"/>
</dbReference>
<dbReference type="PRO" id="PR:Q7L592"/>
<dbReference type="Proteomes" id="UP000005640">
    <property type="component" value="Chromosome 2"/>
</dbReference>
<dbReference type="RNAct" id="Q7L592">
    <property type="molecule type" value="protein"/>
</dbReference>
<dbReference type="Bgee" id="ENSG00000003509">
    <property type="expression patterns" value="Expressed in left testis and 179 other cell types or tissues"/>
</dbReference>
<dbReference type="ExpressionAtlas" id="Q7L592">
    <property type="expression patterns" value="baseline and differential"/>
</dbReference>
<dbReference type="GO" id="GO:0005615">
    <property type="term" value="C:extracellular space"/>
    <property type="evidence" value="ECO:0007005"/>
    <property type="project" value="UniProtKB"/>
</dbReference>
<dbReference type="GO" id="GO:0005759">
    <property type="term" value="C:mitochondrial matrix"/>
    <property type="evidence" value="ECO:0000304"/>
    <property type="project" value="Reactome"/>
</dbReference>
<dbReference type="GO" id="GO:0005739">
    <property type="term" value="C:mitochondrion"/>
    <property type="evidence" value="ECO:0000314"/>
    <property type="project" value="UniProtKB"/>
</dbReference>
<dbReference type="GO" id="GO:0019899">
    <property type="term" value="F:enzyme binding"/>
    <property type="evidence" value="ECO:0000353"/>
    <property type="project" value="UniProtKB"/>
</dbReference>
<dbReference type="GO" id="GO:0008168">
    <property type="term" value="F:methyltransferase activity"/>
    <property type="evidence" value="ECO:0000303"/>
    <property type="project" value="UniProtKB"/>
</dbReference>
<dbReference type="GO" id="GO:0035243">
    <property type="term" value="F:protein-arginine omega-N symmetric methyltransferase activity"/>
    <property type="evidence" value="ECO:0000315"/>
    <property type="project" value="UniProtKB"/>
</dbReference>
<dbReference type="GO" id="GO:0032981">
    <property type="term" value="P:mitochondrial respiratory chain complex I assembly"/>
    <property type="evidence" value="ECO:0000315"/>
    <property type="project" value="UniProtKB"/>
</dbReference>
<dbReference type="GO" id="GO:0019918">
    <property type="term" value="P:peptidyl-arginine methylation, to symmetrical-dimethyl arginine"/>
    <property type="evidence" value="ECO:0000315"/>
    <property type="project" value="UniProtKB"/>
</dbReference>
<dbReference type="FunFam" id="3.40.50.12710:FF:000001">
    <property type="entry name" value="Protein arginine methyltransferase NDUFAF7"/>
    <property type="match status" value="1"/>
</dbReference>
<dbReference type="Gene3D" id="3.40.50.12710">
    <property type="match status" value="1"/>
</dbReference>
<dbReference type="InterPro" id="IPR003788">
    <property type="entry name" value="NDUFAF7"/>
</dbReference>
<dbReference type="InterPro" id="IPR038375">
    <property type="entry name" value="NDUFAF7_sf"/>
</dbReference>
<dbReference type="InterPro" id="IPR029063">
    <property type="entry name" value="SAM-dependent_MTases_sf"/>
</dbReference>
<dbReference type="PANTHER" id="PTHR12049">
    <property type="entry name" value="PROTEIN ARGININE METHYLTRANSFERASE NDUFAF7, MITOCHONDRIAL"/>
    <property type="match status" value="1"/>
</dbReference>
<dbReference type="PANTHER" id="PTHR12049:SF7">
    <property type="entry name" value="PROTEIN ARGININE METHYLTRANSFERASE NDUFAF7, MITOCHONDRIAL"/>
    <property type="match status" value="1"/>
</dbReference>
<dbReference type="Pfam" id="PF02636">
    <property type="entry name" value="Methyltransf_28"/>
    <property type="match status" value="1"/>
</dbReference>
<dbReference type="SUPFAM" id="SSF53335">
    <property type="entry name" value="S-adenosyl-L-methionine-dependent methyltransferases"/>
    <property type="match status" value="1"/>
</dbReference>
<proteinExistence type="evidence at protein level"/>
<reference key="1">
    <citation type="journal article" date="2007" name="BMC Genomics">
        <title>The full-ORF clone resource of the German cDNA consortium.</title>
        <authorList>
            <person name="Bechtel S."/>
            <person name="Rosenfelder H."/>
            <person name="Duda A."/>
            <person name="Schmidt C.P."/>
            <person name="Ernst U."/>
            <person name="Wellenreuther R."/>
            <person name="Mehrle A."/>
            <person name="Schuster C."/>
            <person name="Bahr A."/>
            <person name="Bloecker H."/>
            <person name="Heubner D."/>
            <person name="Hoerlein A."/>
            <person name="Michel G."/>
            <person name="Wedler H."/>
            <person name="Koehrer K."/>
            <person name="Ottenwaelder B."/>
            <person name="Poustka A."/>
            <person name="Wiemann S."/>
            <person name="Schupp I."/>
        </authorList>
    </citation>
    <scope>NUCLEOTIDE SEQUENCE [LARGE SCALE MRNA] (ISOFORM 2)</scope>
    <source>
        <tissue>Endometrial adenocarcinoma</tissue>
    </source>
</reference>
<reference key="2">
    <citation type="journal article" date="2005" name="Nature">
        <title>Generation and annotation of the DNA sequences of human chromosomes 2 and 4.</title>
        <authorList>
            <person name="Hillier L.W."/>
            <person name="Graves T.A."/>
            <person name="Fulton R.S."/>
            <person name="Fulton L.A."/>
            <person name="Pepin K.H."/>
            <person name="Minx P."/>
            <person name="Wagner-McPherson C."/>
            <person name="Layman D."/>
            <person name="Wylie K."/>
            <person name="Sekhon M."/>
            <person name="Becker M.C."/>
            <person name="Fewell G.A."/>
            <person name="Delehaunty K.D."/>
            <person name="Miner T.L."/>
            <person name="Nash W.E."/>
            <person name="Kremitzki C."/>
            <person name="Oddy L."/>
            <person name="Du H."/>
            <person name="Sun H."/>
            <person name="Bradshaw-Cordum H."/>
            <person name="Ali J."/>
            <person name="Carter J."/>
            <person name="Cordes M."/>
            <person name="Harris A."/>
            <person name="Isak A."/>
            <person name="van Brunt A."/>
            <person name="Nguyen C."/>
            <person name="Du F."/>
            <person name="Courtney L."/>
            <person name="Kalicki J."/>
            <person name="Ozersky P."/>
            <person name="Abbott S."/>
            <person name="Armstrong J."/>
            <person name="Belter E.A."/>
            <person name="Caruso L."/>
            <person name="Cedroni M."/>
            <person name="Cotton M."/>
            <person name="Davidson T."/>
            <person name="Desai A."/>
            <person name="Elliott G."/>
            <person name="Erb T."/>
            <person name="Fronick C."/>
            <person name="Gaige T."/>
            <person name="Haakenson W."/>
            <person name="Haglund K."/>
            <person name="Holmes A."/>
            <person name="Harkins R."/>
            <person name="Kim K."/>
            <person name="Kruchowski S.S."/>
            <person name="Strong C.M."/>
            <person name="Grewal N."/>
            <person name="Goyea E."/>
            <person name="Hou S."/>
            <person name="Levy A."/>
            <person name="Martinka S."/>
            <person name="Mead K."/>
            <person name="McLellan M.D."/>
            <person name="Meyer R."/>
            <person name="Randall-Maher J."/>
            <person name="Tomlinson C."/>
            <person name="Dauphin-Kohlberg S."/>
            <person name="Kozlowicz-Reilly A."/>
            <person name="Shah N."/>
            <person name="Swearengen-Shahid S."/>
            <person name="Snider J."/>
            <person name="Strong J.T."/>
            <person name="Thompson J."/>
            <person name="Yoakum M."/>
            <person name="Leonard S."/>
            <person name="Pearman C."/>
            <person name="Trani L."/>
            <person name="Radionenko M."/>
            <person name="Waligorski J.E."/>
            <person name="Wang C."/>
            <person name="Rock S.M."/>
            <person name="Tin-Wollam A.-M."/>
            <person name="Maupin R."/>
            <person name="Latreille P."/>
            <person name="Wendl M.C."/>
            <person name="Yang S.-P."/>
            <person name="Pohl C."/>
            <person name="Wallis J.W."/>
            <person name="Spieth J."/>
            <person name="Bieri T.A."/>
            <person name="Berkowicz N."/>
            <person name="Nelson J.O."/>
            <person name="Osborne J."/>
            <person name="Ding L."/>
            <person name="Meyer R."/>
            <person name="Sabo A."/>
            <person name="Shotland Y."/>
            <person name="Sinha P."/>
            <person name="Wohldmann P.E."/>
            <person name="Cook L.L."/>
            <person name="Hickenbotham M.T."/>
            <person name="Eldred J."/>
            <person name="Williams D."/>
            <person name="Jones T.A."/>
            <person name="She X."/>
            <person name="Ciccarelli F.D."/>
            <person name="Izaurralde E."/>
            <person name="Taylor J."/>
            <person name="Schmutz J."/>
            <person name="Myers R.M."/>
            <person name="Cox D.R."/>
            <person name="Huang X."/>
            <person name="McPherson J.D."/>
            <person name="Mardis E.R."/>
            <person name="Clifton S.W."/>
            <person name="Warren W.C."/>
            <person name="Chinwalla A.T."/>
            <person name="Eddy S.R."/>
            <person name="Marra M.A."/>
            <person name="Ovcharenko I."/>
            <person name="Furey T.S."/>
            <person name="Miller W."/>
            <person name="Eichler E.E."/>
            <person name="Bork P."/>
            <person name="Suyama M."/>
            <person name="Torrents D."/>
            <person name="Waterston R.H."/>
            <person name="Wilson R.K."/>
        </authorList>
    </citation>
    <scope>NUCLEOTIDE SEQUENCE [LARGE SCALE GENOMIC DNA]</scope>
</reference>
<reference key="3">
    <citation type="submission" date="2005-09" db="EMBL/GenBank/DDBJ databases">
        <authorList>
            <person name="Mural R.J."/>
            <person name="Istrail S."/>
            <person name="Sutton G.G."/>
            <person name="Florea L."/>
            <person name="Halpern A.L."/>
            <person name="Mobarry C.M."/>
            <person name="Lippert R."/>
            <person name="Walenz B."/>
            <person name="Shatkay H."/>
            <person name="Dew I."/>
            <person name="Miller J.R."/>
            <person name="Flanigan M.J."/>
            <person name="Edwards N.J."/>
            <person name="Bolanos R."/>
            <person name="Fasulo D."/>
            <person name="Halldorsson B.V."/>
            <person name="Hannenhalli S."/>
            <person name="Turner R."/>
            <person name="Yooseph S."/>
            <person name="Lu F."/>
            <person name="Nusskern D.R."/>
            <person name="Shue B.C."/>
            <person name="Zheng X.H."/>
            <person name="Zhong F."/>
            <person name="Delcher A.L."/>
            <person name="Huson D.H."/>
            <person name="Kravitz S.A."/>
            <person name="Mouchard L."/>
            <person name="Reinert K."/>
            <person name="Remington K.A."/>
            <person name="Clark A.G."/>
            <person name="Waterman M.S."/>
            <person name="Eichler E.E."/>
            <person name="Adams M.D."/>
            <person name="Hunkapiller M.W."/>
            <person name="Myers E.W."/>
            <person name="Venter J.C."/>
        </authorList>
    </citation>
    <scope>NUCLEOTIDE SEQUENCE [LARGE SCALE GENOMIC DNA]</scope>
</reference>
<reference key="4">
    <citation type="journal article" date="2004" name="Genome Res.">
        <title>The status, quality, and expansion of the NIH full-length cDNA project: the Mammalian Gene Collection (MGC).</title>
        <authorList>
            <consortium name="The MGC Project Team"/>
        </authorList>
    </citation>
    <scope>NUCLEOTIDE SEQUENCE [LARGE SCALE MRNA] (ISOFORM 1)</scope>
    <source>
        <tissue>Placenta</tissue>
    </source>
</reference>
<reference key="5">
    <citation type="submission" date="1998-12" db="EMBL/GenBank/DDBJ databases">
        <title>Functional prediction of the coding sequences of 121 new genes deduced by analysis of cDNA clones from human fetal liver.</title>
        <authorList>
            <person name="Zhang C."/>
            <person name="Yu Y."/>
            <person name="Zhang S."/>
            <person name="Wei H."/>
            <person name="Zhou G."/>
            <person name="Ouyang S."/>
            <person name="Luo L."/>
            <person name="Bi J."/>
            <person name="Liu M."/>
            <person name="He F."/>
        </authorList>
    </citation>
    <scope>NUCLEOTIDE SEQUENCE [LARGE SCALE MRNA] OF 208-441 (ISOFORM 1)</scope>
    <source>
        <tissue>Fetal liver</tissue>
    </source>
</reference>
<reference key="6">
    <citation type="journal article" date="2010" name="J. Cell Sci.">
        <title>MidA is a putative methyltransferase that is required for mitochondrial complex I function.</title>
        <authorList>
            <person name="Carilla-Latorre S."/>
            <person name="Gallardo M.E."/>
            <person name="Annesley S.J."/>
            <person name="Calvo-Garrido J."/>
            <person name="Grana O."/>
            <person name="Accari S.L."/>
            <person name="Smith P.K."/>
            <person name="Valencia A."/>
            <person name="Garesse R."/>
            <person name="Fisher P.R."/>
            <person name="Escalante R."/>
        </authorList>
    </citation>
    <scope>SUBCELLULAR LOCATION</scope>
    <scope>FUNCTION</scope>
    <scope>INTERACTION WITH NDUFS2</scope>
</reference>
<reference key="7">
    <citation type="journal article" date="2011" name="BMC Syst. Biol.">
        <title>Initial characterization of the human central proteome.</title>
        <authorList>
            <person name="Burkard T.R."/>
            <person name="Planyavsky M."/>
            <person name="Kaupe I."/>
            <person name="Breitwieser F.P."/>
            <person name="Buerckstuemmer T."/>
            <person name="Bennett K.L."/>
            <person name="Superti-Furga G."/>
            <person name="Colinge J."/>
        </authorList>
    </citation>
    <scope>IDENTIFICATION BY MASS SPECTROMETRY [LARGE SCALE ANALYSIS]</scope>
</reference>
<reference key="8">
    <citation type="journal article" date="2013" name="J. Biol. Chem.">
        <title>NDUFAF7 methylates arginine 85 in the NDUFS2 subunit of human complex I.</title>
        <authorList>
            <person name="Rhein V.F."/>
            <person name="Carroll J."/>
            <person name="Ding S."/>
            <person name="Fearnley I.M."/>
            <person name="Walker J.E."/>
        </authorList>
    </citation>
    <scope>FUNCTION</scope>
    <scope>CATALYTIC ACTIVITY</scope>
    <scope>SUBCELLULAR LOCATION</scope>
    <scope>INTERACTION WITH NDUFS2</scope>
</reference>
<reference key="9">
    <citation type="journal article" date="2014" name="Hum. Mol. Genet.">
        <title>The arginine methyltransferase NDUFAF7 is essential for complex I assembly and early vertebrate embryogenesis.</title>
        <authorList>
            <person name="Zurita Rendon O."/>
            <person name="Silva Neiva L."/>
            <person name="Sasarman F."/>
            <person name="Shoubridge E.A."/>
        </authorList>
    </citation>
    <scope>FUNCTION</scope>
    <scope>SUBCELLULAR LOCATION</scope>
    <scope>MUTAGENESIS OF GLY-124</scope>
</reference>
<reference key="10">
    <citation type="journal article" date="2014" name="J. Proteomics">
        <title>An enzyme assisted RP-RPLC approach for in-depth analysis of human liver phosphoproteome.</title>
        <authorList>
            <person name="Bian Y."/>
            <person name="Song C."/>
            <person name="Cheng K."/>
            <person name="Dong M."/>
            <person name="Wang F."/>
            <person name="Huang J."/>
            <person name="Sun D."/>
            <person name="Wang L."/>
            <person name="Ye M."/>
            <person name="Zou H."/>
        </authorList>
    </citation>
    <scope>IDENTIFICATION BY MASS SPECTROMETRY [LARGE SCALE ANALYSIS]</scope>
    <source>
        <tissue>Liver</tissue>
    </source>
</reference>
<reference key="11">
    <citation type="journal article" date="2015" name="Proteomics">
        <title>N-terminome analysis of the human mitochondrial proteome.</title>
        <authorList>
            <person name="Vaca Jacome A.S."/>
            <person name="Rabilloud T."/>
            <person name="Schaeffer-Reiss C."/>
            <person name="Rompais M."/>
            <person name="Ayoub D."/>
            <person name="Lane L."/>
            <person name="Bairoch A."/>
            <person name="Van Dorsselaer A."/>
            <person name="Carapito C."/>
        </authorList>
    </citation>
    <scope>IDENTIFICATION BY MASS SPECTROMETRY [LARGE SCALE ANALYSIS]</scope>
</reference>
<reference key="12">
    <citation type="journal article" date="2017" name="Invest. Ophthalmol. Vis. Sci.">
        <title>A novel potentially causative variant of NDUFAF7 revealed by mutation screening in a chinese family with pathologic myopia.</title>
        <authorList>
            <person name="Wang B."/>
            <person name="Liu Y."/>
            <person name="Chen S."/>
            <person name="Wu Y."/>
            <person name="Lin S."/>
            <person name="Duan Y."/>
            <person name="Zheng K."/>
            <person name="Zhang L."/>
            <person name="Gu X."/>
            <person name="Hong W."/>
            <person name="Shao H."/>
            <person name="Zeng X."/>
            <person name="Sun B."/>
            <person name="Duan S."/>
        </authorList>
    </citation>
    <scope>SUBCELLULAR LOCATION</scope>
    <scope>INVOLVEMENT IN SUSCEPTIBILITY TO PATHOLOGIC MYOPIA</scope>
    <scope>VARIANT GLU-266</scope>
    <scope>CHARACTERIZATION OF VARIANT GLU-266</scope>
</reference>
<protein>
    <recommendedName>
        <fullName evidence="8">Protein arginine methyltransferase NDUFAF7, mitochondrial</fullName>
        <ecNumber evidence="3">2.1.1.320</ecNumber>
    </recommendedName>
    <alternativeName>
        <fullName>NADH dehydrogenase [ubiquinone] complex I, assembly factor 7</fullName>
    </alternativeName>
    <alternativeName>
        <fullName evidence="7">Protein midA homolog</fullName>
    </alternativeName>
</protein>
<name>NDUF7_HUMAN</name>
<comment type="function">
    <text evidence="2 3 4">Arginine methyltransferase involved in the assembly or stability of mitochondrial NADH:ubiquinone oxidoreductase complex (complex I) (PubMed:20406883, PubMed:24089531, PubMed:24838397). Acts by mediating symmetric dimethylation of 'Arg-118' of NDUFS2 after it assembles into the complex I, stabilizing the early intermediate complex (PubMed:24089531).</text>
</comment>
<comment type="catalytic activity">
    <reaction evidence="3">
        <text>L-arginyl-[protein] + 2 S-adenosyl-L-methionine = N(omega),N(omega)'-dimethyl-L-arginyl-[protein] + 2 S-adenosyl-L-homocysteine + 2 H(+)</text>
        <dbReference type="Rhea" id="RHEA:48108"/>
        <dbReference type="Rhea" id="RHEA-COMP:10532"/>
        <dbReference type="Rhea" id="RHEA-COMP:11992"/>
        <dbReference type="ChEBI" id="CHEBI:15378"/>
        <dbReference type="ChEBI" id="CHEBI:29965"/>
        <dbReference type="ChEBI" id="CHEBI:57856"/>
        <dbReference type="ChEBI" id="CHEBI:59789"/>
        <dbReference type="ChEBI" id="CHEBI:88221"/>
        <dbReference type="EC" id="2.1.1.320"/>
    </reaction>
</comment>
<comment type="subunit">
    <text evidence="3">Interacts with NDUFS2 (PubMed:20406883, PubMed:24089531).</text>
</comment>
<comment type="interaction">
    <interactant intactId="EBI-2555519">
        <id>Q7L592</id>
    </interactant>
    <interactant intactId="EBI-5323863">
        <id>Q5S007</id>
        <label>LRRK2</label>
    </interactant>
    <organismsDiffer>false</organismsDiffer>
    <experiments>2</experiments>
</comment>
<comment type="subcellular location">
    <subcellularLocation>
        <location evidence="2 3 4 5">Mitochondrion</location>
    </subcellularLocation>
</comment>
<comment type="alternative products">
    <event type="alternative splicing"/>
    <isoform>
        <id>Q7L592-1</id>
        <name>1</name>
        <sequence type="displayed"/>
    </isoform>
    <isoform>
        <id>Q7L592-2</id>
        <name>2</name>
        <sequence type="described" ref="VSP_030606 VSP_030607"/>
    </isoform>
</comment>
<comment type="disease">
    <text evidence="5">Defects in NDUFAF7 may be a cause of susceptibility to pathologic myopia, a genetically heterogeneous disorder characterized by extreme, familial, early-onset vision loss and described as myopia accompanied by severe deformation of the eye besides excessive elongation of the eye.</text>
</comment>
<comment type="similarity">
    <text evidence="8">Belongs to the NDUFAF7 family.</text>
</comment>
<comment type="caution">
    <text evidence="2 4">Stoichiometry of the protein is unclear. According to a report, it forms a homodimer (PubMed:20406883). According to another publication, it is mainly monomeric (PubMed:24838397).</text>
</comment>
<comment type="sequence caution" evidence="8">
    <conflict type="erroneous initiation">
        <sequence resource="EMBL-CDS" id="AAF71091"/>
    </conflict>
</comment>
<comment type="sequence caution" evidence="8">
    <conflict type="erroneous initiation">
        <sequence resource="EMBL-CDS" id="AAH12374"/>
    </conflict>
</comment>